<keyword id="KW-0903">Direct protein sequencing</keyword>
<keyword id="KW-0325">Glycoprotein</keyword>
<keyword id="KW-0378">Hydrolase</keyword>
<keyword id="KW-1185">Reference proteome</keyword>
<keyword id="KW-0964">Secreted</keyword>
<keyword id="KW-0732">Signal</keyword>
<organism>
    <name type="scientific">Saccharomyces cerevisiae (strain ATCC 204508 / S288c)</name>
    <name type="common">Baker's yeast</name>
    <dbReference type="NCBI Taxonomy" id="559292"/>
    <lineage>
        <taxon>Eukaryota</taxon>
        <taxon>Fungi</taxon>
        <taxon>Dikarya</taxon>
        <taxon>Ascomycota</taxon>
        <taxon>Saccharomycotina</taxon>
        <taxon>Saccharomycetes</taxon>
        <taxon>Saccharomycetales</taxon>
        <taxon>Saccharomycetaceae</taxon>
        <taxon>Saccharomyces</taxon>
    </lineage>
</organism>
<evidence type="ECO:0000250" key="1"/>
<evidence type="ECO:0000255" key="2"/>
<evidence type="ECO:0000269" key="3">
    <source>
    </source>
</evidence>
<evidence type="ECO:0000269" key="4">
    <source>
    </source>
</evidence>
<evidence type="ECO:0000269" key="5">
    <source>
    </source>
</evidence>
<evidence type="ECO:0000269" key="6">
    <source>
    </source>
</evidence>
<evidence type="ECO:0000269" key="7">
    <source>
    </source>
</evidence>
<evidence type="ECO:0000305" key="8"/>
<feature type="signal peptide" evidence="6 7">
    <location>
        <begin position="1"/>
        <end position="17"/>
    </location>
</feature>
<feature type="chain" id="PRO_0000023954" description="Repressible acid phosphatase">
    <location>
        <begin position="18"/>
        <end position="467"/>
    </location>
</feature>
<feature type="active site" description="Nucleophile" evidence="1">
    <location>
        <position position="75"/>
    </location>
</feature>
<feature type="active site" description="Proton donor" evidence="1">
    <location>
        <position position="338"/>
    </location>
</feature>
<feature type="glycosylation site" description="N-linked (GlcNAc...) asparagine" evidence="2">
    <location>
        <position position="97"/>
    </location>
</feature>
<feature type="glycosylation site" description="N-linked (GlcNAc...) asparagine" evidence="2">
    <location>
        <position position="103"/>
    </location>
</feature>
<feature type="glycosylation site" description="N-linked (GlcNAc...) asparagine" evidence="2">
    <location>
        <position position="162"/>
    </location>
</feature>
<feature type="glycosylation site" description="N-linked (GlcNAc...) asparagine" evidence="2">
    <location>
        <position position="192"/>
    </location>
</feature>
<feature type="glycosylation site" description="N-linked (GlcNAc...) asparagine" evidence="2">
    <location>
        <position position="250"/>
    </location>
</feature>
<feature type="glycosylation site" description="N-linked (GlcNAc...) asparagine" evidence="2">
    <location>
        <position position="315"/>
    </location>
</feature>
<feature type="glycosylation site" description="N-linked (GlcNAc...) asparagine" evidence="2">
    <location>
        <position position="356"/>
    </location>
</feature>
<feature type="glycosylation site" description="N-linked (GlcNAc...) asparagine" evidence="2">
    <location>
        <position position="390"/>
    </location>
</feature>
<feature type="glycosylation site" description="N-linked (GlcNAc...) asparagine" evidence="2">
    <location>
        <position position="439"/>
    </location>
</feature>
<feature type="glycosylation site" description="N-linked (GlcNAc...) asparagine" evidence="2">
    <location>
        <position position="445"/>
    </location>
</feature>
<feature type="glycosylation site" description="N-linked (GlcNAc...) asparagine" evidence="2">
    <location>
        <position position="456"/>
    </location>
</feature>
<feature type="glycosylation site" description="N-linked (GlcNAc...) asparagine" evidence="2">
    <location>
        <position position="461"/>
    </location>
</feature>
<feature type="sequence conflict" description="In Ref. 1; CAA24630." evidence="8" ref="1">
    <original>D</original>
    <variation>Y</variation>
    <location>
        <position position="36"/>
    </location>
</feature>
<feature type="sequence conflict" description="In Ref. 1; CAA24630." evidence="8" ref="1">
    <original>A</original>
    <variation>G</variation>
    <location>
        <position position="130"/>
    </location>
</feature>
<feature type="sequence conflict" description="In Ref. 1; CAA24630." evidence="8" ref="1">
    <original>H</original>
    <variation>Q</variation>
    <location>
        <position position="294"/>
    </location>
</feature>
<feature type="sequence conflict" description="In Ref. 1; CAA24630." evidence="8" ref="1">
    <original>S</original>
    <variation>V</variation>
    <location>
        <position position="446"/>
    </location>
</feature>
<feature type="sequence conflict" description="In Ref. 1; CAA24630." evidence="8" ref="1">
    <original>AS</original>
    <variation>DT</variation>
    <location>
        <begin position="462"/>
        <end position="463"/>
    </location>
</feature>
<feature type="sequence conflict" description="In Ref. 1; CAA24630." evidence="8" ref="1">
    <original>R</original>
    <variation>K</variation>
    <location>
        <position position="466"/>
    </location>
</feature>
<name>PPA5_YEAST</name>
<gene>
    <name type="primary">PHO5</name>
    <name type="ordered locus">YBR093C</name>
    <name type="ORF">YBR0814</name>
</gene>
<reference key="1">
    <citation type="journal article" date="1983" name="Nucleic Acids Res.">
        <title>The nucleotide sequence of the yeast PHO5 gene: a putative precursor of repressible acid phosphatase contains a signal peptide.</title>
        <authorList>
            <person name="Arima K."/>
            <person name="Oshima T."/>
            <person name="Kubota I."/>
            <person name="Nakamura N."/>
            <person name="Mizunaga T."/>
            <person name="Toh-e A."/>
        </authorList>
    </citation>
    <scope>NUCLEOTIDE SEQUENCE [GENOMIC DNA]</scope>
    <scope>PROTEIN SEQUENCE OF 18-26</scope>
    <scope>CATALYTIC ACTIVITY</scope>
</reference>
<reference key="2">
    <citation type="journal article" date="1984" name="Nucleic Acids Res.">
        <title>Structural analysis of the two tandemly repeated acid phosphatase genes in yeast.</title>
        <authorList>
            <person name="Bajwa W."/>
            <person name="Meyhack B."/>
            <person name="Rudolph H."/>
            <person name="Schweingruber A.-M."/>
            <person name="Hinnen A."/>
        </authorList>
    </citation>
    <scope>NUCLEOTIDE SEQUENCE [GENOMIC DNA]</scope>
    <scope>PROTEIN SEQUENCE OF 18-45</scope>
</reference>
<reference key="3">
    <citation type="journal article" date="1994" name="Yeast">
        <title>Analysis of a 70 kb region on the right arm of yeast chromosome II.</title>
        <authorList>
            <person name="Mannhaupt G."/>
            <person name="Stucka R."/>
            <person name="Ehnle S."/>
            <person name="Vetter I."/>
            <person name="Feldmann H."/>
        </authorList>
    </citation>
    <scope>NUCLEOTIDE SEQUENCE [GENOMIC DNA]</scope>
    <source>
        <strain>ATCC 204508 / S288c</strain>
    </source>
</reference>
<reference key="4">
    <citation type="journal article" date="1994" name="EMBO J.">
        <title>Complete DNA sequence of yeast chromosome II.</title>
        <authorList>
            <person name="Feldmann H."/>
            <person name="Aigle M."/>
            <person name="Aljinovic G."/>
            <person name="Andre B."/>
            <person name="Baclet M.C."/>
            <person name="Barthe C."/>
            <person name="Baur A."/>
            <person name="Becam A.-M."/>
            <person name="Biteau N."/>
            <person name="Boles E."/>
            <person name="Brandt T."/>
            <person name="Brendel M."/>
            <person name="Brueckner M."/>
            <person name="Bussereau F."/>
            <person name="Christiansen C."/>
            <person name="Contreras R."/>
            <person name="Crouzet M."/>
            <person name="Cziepluch C."/>
            <person name="Demolis N."/>
            <person name="Delaveau T."/>
            <person name="Doignon F."/>
            <person name="Domdey H."/>
            <person name="Duesterhus S."/>
            <person name="Dubois E."/>
            <person name="Dujon B."/>
            <person name="El Bakkoury M."/>
            <person name="Entian K.-D."/>
            <person name="Feuermann M."/>
            <person name="Fiers W."/>
            <person name="Fobo G.M."/>
            <person name="Fritz C."/>
            <person name="Gassenhuber J."/>
            <person name="Glansdorff N."/>
            <person name="Goffeau A."/>
            <person name="Grivell L.A."/>
            <person name="de Haan M."/>
            <person name="Hein C."/>
            <person name="Herbert C.J."/>
            <person name="Hollenberg C.P."/>
            <person name="Holmstroem K."/>
            <person name="Jacq C."/>
            <person name="Jacquet M."/>
            <person name="Jauniaux J.-C."/>
            <person name="Jonniaux J.-L."/>
            <person name="Kallesoee T."/>
            <person name="Kiesau P."/>
            <person name="Kirchrath L."/>
            <person name="Koetter P."/>
            <person name="Korol S."/>
            <person name="Liebl S."/>
            <person name="Logghe M."/>
            <person name="Lohan A.J.E."/>
            <person name="Louis E.J."/>
            <person name="Li Z.Y."/>
            <person name="Maat M.J."/>
            <person name="Mallet L."/>
            <person name="Mannhaupt G."/>
            <person name="Messenguy F."/>
            <person name="Miosga T."/>
            <person name="Molemans F."/>
            <person name="Mueller S."/>
            <person name="Nasr F."/>
            <person name="Obermaier B."/>
            <person name="Perea J."/>
            <person name="Pierard A."/>
            <person name="Piravandi E."/>
            <person name="Pohl F.M."/>
            <person name="Pohl T.M."/>
            <person name="Potier S."/>
            <person name="Proft M."/>
            <person name="Purnelle B."/>
            <person name="Ramezani Rad M."/>
            <person name="Rieger M."/>
            <person name="Rose M."/>
            <person name="Schaaff-Gerstenschlaeger I."/>
            <person name="Scherens B."/>
            <person name="Schwarzlose C."/>
            <person name="Skala J."/>
            <person name="Slonimski P.P."/>
            <person name="Smits P.H.M."/>
            <person name="Souciet J.-L."/>
            <person name="Steensma H.Y."/>
            <person name="Stucka R."/>
            <person name="Urrestarazu L.A."/>
            <person name="van der Aart Q.J.M."/>
            <person name="Van Dyck L."/>
            <person name="Vassarotti A."/>
            <person name="Vetter I."/>
            <person name="Vierendeels F."/>
            <person name="Vissers S."/>
            <person name="Wagner G."/>
            <person name="de Wergifosse P."/>
            <person name="Wolfe K.H."/>
            <person name="Zagulski M."/>
            <person name="Zimmermann F.K."/>
            <person name="Mewes H.-W."/>
            <person name="Kleine K."/>
        </authorList>
    </citation>
    <scope>NUCLEOTIDE SEQUENCE [LARGE SCALE GENOMIC DNA]</scope>
    <source>
        <strain>ATCC 204508 / S288c</strain>
    </source>
</reference>
<reference key="5">
    <citation type="journal article" date="2014" name="G3 (Bethesda)">
        <title>The reference genome sequence of Saccharomyces cerevisiae: Then and now.</title>
        <authorList>
            <person name="Engel S.R."/>
            <person name="Dietrich F.S."/>
            <person name="Fisk D.G."/>
            <person name="Binkley G."/>
            <person name="Balakrishnan R."/>
            <person name="Costanzo M.C."/>
            <person name="Dwight S.S."/>
            <person name="Hitz B.C."/>
            <person name="Karra K."/>
            <person name="Nash R.S."/>
            <person name="Weng S."/>
            <person name="Wong E.D."/>
            <person name="Lloyd P."/>
            <person name="Skrzypek M.S."/>
            <person name="Miyasato S.R."/>
            <person name="Simison M."/>
            <person name="Cherry J.M."/>
        </authorList>
    </citation>
    <scope>GENOME REANNOTATION</scope>
    <source>
        <strain>ATCC 204508 / S288c</strain>
    </source>
</reference>
<reference key="6">
    <citation type="journal article" date="1986" name="Mol. Cell. Biol.">
        <title>Reciprocal regulation of the tandemly duplicated PHO5/PHO3 gene cluster within the acid phosphatase multigene family of Saccharomyces cerevisiae.</title>
        <authorList>
            <person name="Tait-Kamradt A.G."/>
            <person name="Turner K.J."/>
            <person name="Kramer R.A."/>
            <person name="Elliott Q.D."/>
            <person name="Bostian S.J."/>
            <person name="Thill G.P."/>
            <person name="Rogers D.T."/>
            <person name="Bostian K.A."/>
        </authorList>
    </citation>
    <scope>NUCLEOTIDE SEQUENCE [GENOMIC DNA] OF 1-44</scope>
    <scope>CATALYTIC ACTIVITY</scope>
    <scope>REPRESSION</scope>
</reference>
<reference key="7">
    <citation type="journal article" date="2003" name="Nature">
        <title>Global analysis of protein expression in yeast.</title>
        <authorList>
            <person name="Ghaemmaghami S."/>
            <person name="Huh W.-K."/>
            <person name="Bower K."/>
            <person name="Howson R.W."/>
            <person name="Belle A."/>
            <person name="Dephoure N."/>
            <person name="O'Shea E.K."/>
            <person name="Weissman J.S."/>
        </authorList>
    </citation>
    <scope>LEVEL OF PROTEIN EXPRESSION [LARGE SCALE ANALYSIS]</scope>
</reference>
<reference key="8">
    <citation type="journal article" date="2005" name="Eukaryot. Cell">
        <title>Pho5p and newly identified nucleotide pyrophosphatases/ phosphodiesterases regulate extracellular nucleotide phosphate metabolism in Saccharomyces cerevisiae.</title>
        <authorList>
            <person name="Kennedy E.J."/>
            <person name="Pillus L."/>
            <person name="Ghosh G."/>
        </authorList>
    </citation>
    <scope>FUNCTION</scope>
    <scope>INDUCTION</scope>
</reference>
<dbReference type="EC" id="3.1.3.2"/>
<dbReference type="EMBL" id="V01320">
    <property type="protein sequence ID" value="CAA24630.1"/>
    <property type="molecule type" value="Genomic_DNA"/>
</dbReference>
<dbReference type="EMBL" id="X01079">
    <property type="protein sequence ID" value="CAA25555.1"/>
    <property type="molecule type" value="Genomic_DNA"/>
</dbReference>
<dbReference type="EMBL" id="X78993">
    <property type="protein sequence ID" value="CAA55598.1"/>
    <property type="molecule type" value="Genomic_DNA"/>
</dbReference>
<dbReference type="EMBL" id="Z35962">
    <property type="protein sequence ID" value="CAA85046.1"/>
    <property type="molecule type" value="Genomic_DNA"/>
</dbReference>
<dbReference type="EMBL" id="X01080">
    <property type="protein sequence ID" value="CAA25556.1"/>
    <property type="molecule type" value="Genomic_DNA"/>
</dbReference>
<dbReference type="EMBL" id="BK006936">
    <property type="protein sequence ID" value="DAA07214.1"/>
    <property type="molecule type" value="Genomic_DNA"/>
</dbReference>
<dbReference type="PIR" id="S05795">
    <property type="entry name" value="PABYC"/>
</dbReference>
<dbReference type="RefSeq" id="NP_009651.3">
    <property type="nucleotide sequence ID" value="NM_001178441.3"/>
</dbReference>
<dbReference type="SMR" id="P00635"/>
<dbReference type="BioGRID" id="32799">
    <property type="interactions" value="88"/>
</dbReference>
<dbReference type="DIP" id="DIP-4916N"/>
<dbReference type="FunCoup" id="P00635">
    <property type="interactions" value="613"/>
</dbReference>
<dbReference type="IntAct" id="P00635">
    <property type="interactions" value="12"/>
</dbReference>
<dbReference type="MINT" id="P00635"/>
<dbReference type="STRING" id="4932.YBR093C"/>
<dbReference type="GlyCosmos" id="P00635">
    <property type="glycosylation" value="12 sites, No reported glycans"/>
</dbReference>
<dbReference type="GlyGen" id="P00635">
    <property type="glycosylation" value="12 sites"/>
</dbReference>
<dbReference type="iPTMnet" id="P00635"/>
<dbReference type="PaxDb" id="4932-YBR093C"/>
<dbReference type="PeptideAtlas" id="P00635"/>
<dbReference type="TopDownProteomics" id="P00635"/>
<dbReference type="EnsemblFungi" id="YBR093C_mRNA">
    <property type="protein sequence ID" value="YBR093C"/>
    <property type="gene ID" value="YBR093C"/>
</dbReference>
<dbReference type="GeneID" id="852390"/>
<dbReference type="KEGG" id="sce:YBR093C"/>
<dbReference type="AGR" id="SGD:S000000297"/>
<dbReference type="SGD" id="S000000297">
    <property type="gene designation" value="PHO5"/>
</dbReference>
<dbReference type="VEuPathDB" id="FungiDB:YBR093C"/>
<dbReference type="eggNOG" id="KOG1382">
    <property type="taxonomic scope" value="Eukaryota"/>
</dbReference>
<dbReference type="GeneTree" id="ENSGT00390000018409"/>
<dbReference type="HOGENOM" id="CLU_020880_3_1_1"/>
<dbReference type="InParanoid" id="P00635"/>
<dbReference type="OMA" id="WCAFEVN"/>
<dbReference type="OrthoDB" id="6509975at2759"/>
<dbReference type="BioCyc" id="YEAST:YBR093C-MONOMER"/>
<dbReference type="BioGRID-ORCS" id="852390">
    <property type="hits" value="0 hits in 10 CRISPR screens"/>
</dbReference>
<dbReference type="PRO" id="PR:P00635"/>
<dbReference type="Proteomes" id="UP000002311">
    <property type="component" value="Chromosome II"/>
</dbReference>
<dbReference type="RNAct" id="P00635">
    <property type="molecule type" value="protein"/>
</dbReference>
<dbReference type="GO" id="GO:0071944">
    <property type="term" value="C:cell periphery"/>
    <property type="evidence" value="ECO:0007005"/>
    <property type="project" value="SGD"/>
</dbReference>
<dbReference type="GO" id="GO:0005576">
    <property type="term" value="C:extracellular region"/>
    <property type="evidence" value="ECO:0007669"/>
    <property type="project" value="UniProtKB-SubCell"/>
</dbReference>
<dbReference type="GO" id="GO:0009277">
    <property type="term" value="C:fungal-type cell wall"/>
    <property type="evidence" value="ECO:0000314"/>
    <property type="project" value="SGD"/>
</dbReference>
<dbReference type="GO" id="GO:0003993">
    <property type="term" value="F:acid phosphatase activity"/>
    <property type="evidence" value="ECO:0000314"/>
    <property type="project" value="SGD"/>
</dbReference>
<dbReference type="GO" id="GO:0047429">
    <property type="term" value="F:nucleoside triphosphate diphosphatase activity"/>
    <property type="evidence" value="ECO:0000315"/>
    <property type="project" value="SGD"/>
</dbReference>
<dbReference type="GO" id="GO:0017111">
    <property type="term" value="F:ribonucleoside triphosphate phosphatase activity"/>
    <property type="evidence" value="ECO:0000315"/>
    <property type="project" value="SGD"/>
</dbReference>
<dbReference type="GO" id="GO:0016036">
    <property type="term" value="P:cellular response to phosphate starvation"/>
    <property type="evidence" value="ECO:0000315"/>
    <property type="project" value="SGD"/>
</dbReference>
<dbReference type="GO" id="GO:0006796">
    <property type="term" value="P:phosphate-containing compound metabolic process"/>
    <property type="evidence" value="ECO:0000315"/>
    <property type="project" value="SGD"/>
</dbReference>
<dbReference type="GO" id="GO:0008361">
    <property type="term" value="P:regulation of cell size"/>
    <property type="evidence" value="ECO:0007001"/>
    <property type="project" value="SGD"/>
</dbReference>
<dbReference type="CDD" id="cd07061">
    <property type="entry name" value="HP_HAP_like"/>
    <property type="match status" value="1"/>
</dbReference>
<dbReference type="FunFam" id="3.40.50.1240:FF:000021">
    <property type="entry name" value="Acid phosphatase"/>
    <property type="match status" value="1"/>
</dbReference>
<dbReference type="Gene3D" id="3.40.50.1240">
    <property type="entry name" value="Phosphoglycerate mutase-like"/>
    <property type="match status" value="1"/>
</dbReference>
<dbReference type="InterPro" id="IPR033379">
    <property type="entry name" value="Acid_Pase_AS"/>
</dbReference>
<dbReference type="InterPro" id="IPR000560">
    <property type="entry name" value="His_Pase_clade-2"/>
</dbReference>
<dbReference type="InterPro" id="IPR029033">
    <property type="entry name" value="His_PPase_superfam"/>
</dbReference>
<dbReference type="InterPro" id="IPR016274">
    <property type="entry name" value="Histidine_acid_Pase_euk"/>
</dbReference>
<dbReference type="PANTHER" id="PTHR20963:SF18">
    <property type="entry name" value="ACID PHOSPHATASE PHO11-RELATED"/>
    <property type="match status" value="1"/>
</dbReference>
<dbReference type="PANTHER" id="PTHR20963">
    <property type="entry name" value="MULTIPLE INOSITOL POLYPHOSPHATE PHOSPHATASE-RELATED"/>
    <property type="match status" value="1"/>
</dbReference>
<dbReference type="Pfam" id="PF00328">
    <property type="entry name" value="His_Phos_2"/>
    <property type="match status" value="1"/>
</dbReference>
<dbReference type="PIRSF" id="PIRSF000894">
    <property type="entry name" value="Acid_phosphatase"/>
    <property type="match status" value="1"/>
</dbReference>
<dbReference type="SUPFAM" id="SSF53254">
    <property type="entry name" value="Phosphoglycerate mutase-like"/>
    <property type="match status" value="1"/>
</dbReference>
<dbReference type="PROSITE" id="PS00616">
    <property type="entry name" value="HIS_ACID_PHOSPHAT_1"/>
    <property type="match status" value="1"/>
</dbReference>
<dbReference type="PROSITE" id="PS00778">
    <property type="entry name" value="HIS_ACID_PHOSPHAT_2"/>
    <property type="match status" value="1"/>
</dbReference>
<sequence length="467" mass="52859">MFKSVVYSILAASLANAGTIPLGKLADVDKIGTQKDIFPFLGGAGPYYSFPGDYGISRDLPEGCEMKQLQMVGRHGERYPTVSLAKTIKSTWYKLSNYTRQFNGSLSFLNDDYEFFIRDDDDLEMETTFANSDDVLNPYTGEMNAKRHARDFLAQYGYMVENQTSFAVFTSNSKRCHDTAQYFIDGLGDQFNITLQTVSEAESAGANTLSACNSCPAWDYDANDDIVNEYDTTYLDDIAKRLNKENKGLNLTSTDASTLFSWCAFEVNAKGYSDVCDIFTKDELVHYSYYQDLHTYYHEGPGYDIIKSVGSNLFNASVKLLKQSEIQDQKVWLSFTHDTDILNFLTTAGIIDDKNNLTAEYVPFMGNTFHRSWYVPQGARVYTEKFQCSNDTYVRYVINDAVVPIETCSTGPGFSCEINDFYDYAEKRVAGTDFLKVCNVSSVSNSTELTFYWDWNTTHYNASLLRQ</sequence>
<comment type="function">
    <text evidence="4">Partially mediates extracellular nucleotide derived phosphate hydrolysis along with NPP1 and NPP2.</text>
</comment>
<comment type="catalytic activity">
    <reaction evidence="5 7">
        <text>a phosphate monoester + H2O = an alcohol + phosphate</text>
        <dbReference type="Rhea" id="RHEA:15017"/>
        <dbReference type="ChEBI" id="CHEBI:15377"/>
        <dbReference type="ChEBI" id="CHEBI:30879"/>
        <dbReference type="ChEBI" id="CHEBI:43474"/>
        <dbReference type="ChEBI" id="CHEBI:67140"/>
        <dbReference type="EC" id="3.1.3.2"/>
    </reaction>
</comment>
<comment type="subcellular location">
    <subcellularLocation>
        <location>Secreted</location>
    </subcellularLocation>
</comment>
<comment type="induction">
    <text evidence="4 5">Expression induced during phosphate starvation. Repressed by inorganic phosphate.</text>
</comment>
<comment type="PTM">
    <text>Glycosylated during secretion across the membrane.</text>
</comment>
<comment type="miscellaneous">
    <text evidence="3">Present with 1110 molecules/cell in log phase SD medium.</text>
</comment>
<comment type="similarity">
    <text evidence="8">Belongs to the histidine acid phosphatase family.</text>
</comment>
<proteinExistence type="evidence at protein level"/>
<protein>
    <recommendedName>
        <fullName>Repressible acid phosphatase</fullName>
        <ecNumber>3.1.3.2</ecNumber>
    </recommendedName>
    <alternativeName>
        <fullName>P60</fullName>
    </alternativeName>
</protein>
<accession>P00635</accession>
<accession>D6VQ94</accession>